<reference key="1">
    <citation type="journal article" date="2007" name="Science">
        <title>Sea anemone genome reveals ancestral eumetazoan gene repertoire and genomic organization.</title>
        <authorList>
            <person name="Putnam N.H."/>
            <person name="Srivastava M."/>
            <person name="Hellsten U."/>
            <person name="Dirks B."/>
            <person name="Chapman J."/>
            <person name="Salamov A."/>
            <person name="Terry A."/>
            <person name="Shapiro H."/>
            <person name="Lindquist E."/>
            <person name="Kapitonov V.V."/>
            <person name="Jurka J."/>
            <person name="Genikhovich G."/>
            <person name="Grigoriev I.V."/>
            <person name="Lucas S.M."/>
            <person name="Steele R.E."/>
            <person name="Finnerty J.R."/>
            <person name="Technau U."/>
            <person name="Martindale M.Q."/>
            <person name="Rokhsar D.S."/>
        </authorList>
    </citation>
    <scope>NUCLEOTIDE SEQUENCE [LARGE SCALE GENOMIC DNA]</scope>
    <source>
        <strain>CH2 X CH6</strain>
    </source>
</reference>
<dbReference type="EMBL" id="DS470049">
    <property type="protein sequence ID" value="EDO30441.1"/>
    <property type="molecule type" value="Genomic_DNA"/>
</dbReference>
<dbReference type="RefSeq" id="XP_001622541.1">
    <property type="nucleotide sequence ID" value="XM_001622491.1"/>
</dbReference>
<dbReference type="SMR" id="A7T0T1"/>
<dbReference type="EnsemblMetazoa" id="EDO30441">
    <property type="protein sequence ID" value="EDO30441"/>
    <property type="gene ID" value="NEMVEDRAFT_v1g220584"/>
</dbReference>
<dbReference type="eggNOG" id="ENOG502SW2H">
    <property type="taxonomic scope" value="Eukaryota"/>
</dbReference>
<dbReference type="HOGENOM" id="CLU_086902_4_0_1"/>
<dbReference type="InParanoid" id="A7T0T1"/>
<dbReference type="OMA" id="ACPVAND"/>
<dbReference type="PhylomeDB" id="A7T0T1"/>
<dbReference type="Proteomes" id="UP000001593">
    <property type="component" value="Unassembled WGS sequence"/>
</dbReference>
<dbReference type="GO" id="GO:0005506">
    <property type="term" value="F:iron ion binding"/>
    <property type="evidence" value="ECO:0007669"/>
    <property type="project" value="InterPro"/>
</dbReference>
<dbReference type="GO" id="GO:0005344">
    <property type="term" value="F:oxygen carrier activity"/>
    <property type="evidence" value="ECO:0007669"/>
    <property type="project" value="UniProtKB-KW"/>
</dbReference>
<dbReference type="CDD" id="cd00522">
    <property type="entry name" value="Hemerythrin-like"/>
    <property type="match status" value="1"/>
</dbReference>
<dbReference type="Gene3D" id="1.20.120.50">
    <property type="entry name" value="Hemerythrin-like"/>
    <property type="match status" value="1"/>
</dbReference>
<dbReference type="InterPro" id="IPR002063">
    <property type="entry name" value="Haemerythrin"/>
</dbReference>
<dbReference type="InterPro" id="IPR050669">
    <property type="entry name" value="Hemerythrin"/>
</dbReference>
<dbReference type="InterPro" id="IPR012312">
    <property type="entry name" value="Hemerythrin-like"/>
</dbReference>
<dbReference type="InterPro" id="IPR035938">
    <property type="entry name" value="Hemerythrin-like_sf"/>
</dbReference>
<dbReference type="PANTHER" id="PTHR37164">
    <property type="entry name" value="BACTERIOHEMERYTHRIN"/>
    <property type="match status" value="1"/>
</dbReference>
<dbReference type="PANTHER" id="PTHR37164:SF1">
    <property type="entry name" value="BACTERIOHEMERYTHRIN"/>
    <property type="match status" value="1"/>
</dbReference>
<dbReference type="Pfam" id="PF01814">
    <property type="entry name" value="Hemerythrin"/>
    <property type="match status" value="1"/>
</dbReference>
<dbReference type="PRINTS" id="PR00186">
    <property type="entry name" value="HEMERYTHRIN"/>
</dbReference>
<dbReference type="SUPFAM" id="SSF47188">
    <property type="entry name" value="Hemerythrin-like"/>
    <property type="match status" value="1"/>
</dbReference>
<sequence>MGLPPIECPFDIPKPFRHPDLFDKFSNCDPLPIFFLNRWNESFKVFYQNLDDEHRGLFDVVFDVDAKRGDAGAVSKAASAFKGHFTTEEAEMKKGVDAGKLDGAHYKGHCTAHNKFLELFGSFGNNLGDDEINYSMKWLVNHIKSTDFHYKGKLIQ</sequence>
<name>HEMTL_NEMVE</name>
<gene>
    <name type="ORF">v1g220584</name>
</gene>
<feature type="chain" id="PRO_0000343359" description="Hemerythrin-like protein">
    <location>
        <begin position="1"/>
        <end position="156"/>
    </location>
</feature>
<feature type="binding site" evidence="2">
    <location>
        <position position="54"/>
    </location>
    <ligand>
        <name>Fe cation</name>
        <dbReference type="ChEBI" id="CHEBI:24875"/>
        <label>1</label>
    </ligand>
</feature>
<feature type="binding site" evidence="2">
    <location>
        <position position="84"/>
    </location>
    <ligand>
        <name>Fe cation</name>
        <dbReference type="ChEBI" id="CHEBI:24875"/>
        <label>1</label>
    </ligand>
</feature>
<feature type="binding site" evidence="2">
    <location>
        <position position="88"/>
    </location>
    <ligand>
        <name>Fe cation</name>
        <dbReference type="ChEBI" id="CHEBI:24875"/>
        <label>1</label>
    </ligand>
</feature>
<feature type="binding site" evidence="2">
    <location>
        <position position="88"/>
    </location>
    <ligand>
        <name>Fe cation</name>
        <dbReference type="ChEBI" id="CHEBI:24875"/>
        <label>2</label>
    </ligand>
</feature>
<feature type="binding site" evidence="2">
    <location>
        <position position="109"/>
    </location>
    <ligand>
        <name>Fe cation</name>
        <dbReference type="ChEBI" id="CHEBI:24875"/>
        <label>2</label>
    </ligand>
</feature>
<feature type="binding site" evidence="2">
    <location>
        <position position="113"/>
    </location>
    <ligand>
        <name>Fe cation</name>
        <dbReference type="ChEBI" id="CHEBI:24875"/>
        <label>2</label>
    </ligand>
</feature>
<feature type="binding site" evidence="2">
    <location>
        <position position="142"/>
    </location>
    <ligand>
        <name>Fe cation</name>
        <dbReference type="ChEBI" id="CHEBI:24875"/>
        <label>2</label>
    </ligand>
</feature>
<feature type="binding site" evidence="2">
    <location>
        <position position="147"/>
    </location>
    <ligand>
        <name>Fe cation</name>
        <dbReference type="ChEBI" id="CHEBI:24875"/>
        <label>1</label>
    </ligand>
</feature>
<feature type="binding site" evidence="2">
    <location>
        <position position="147"/>
    </location>
    <ligand>
        <name>Fe cation</name>
        <dbReference type="ChEBI" id="CHEBI:24875"/>
        <label>2</label>
    </ligand>
</feature>
<comment type="function">
    <text evidence="1">Oxygen-binding protein. The oxygen-binding site contains two iron atoms (By similarity).</text>
</comment>
<comment type="similarity">
    <text evidence="3">Belongs to the hemerythrin family.</text>
</comment>
<keyword id="KW-0408">Iron</keyword>
<keyword id="KW-0479">Metal-binding</keyword>
<keyword id="KW-0561">Oxygen transport</keyword>
<keyword id="KW-1185">Reference proteome</keyword>
<keyword id="KW-0813">Transport</keyword>
<organism>
    <name type="scientific">Nematostella vectensis</name>
    <name type="common">Starlet sea anemone</name>
    <dbReference type="NCBI Taxonomy" id="45351"/>
    <lineage>
        <taxon>Eukaryota</taxon>
        <taxon>Metazoa</taxon>
        <taxon>Cnidaria</taxon>
        <taxon>Anthozoa</taxon>
        <taxon>Hexacorallia</taxon>
        <taxon>Actiniaria</taxon>
        <taxon>Edwardsiidae</taxon>
        <taxon>Nematostella</taxon>
    </lineage>
</organism>
<accession>A7T0T1</accession>
<evidence type="ECO:0000250" key="1"/>
<evidence type="ECO:0000250" key="2">
    <source>
        <dbReference type="UniProtKB" id="P02244"/>
    </source>
</evidence>
<evidence type="ECO:0000305" key="3"/>
<protein>
    <recommendedName>
        <fullName>Hemerythrin-like protein</fullName>
    </recommendedName>
</protein>
<proteinExistence type="inferred from homology"/>